<keyword id="KW-1003">Cell membrane</keyword>
<keyword id="KW-0378">Hydrolase</keyword>
<keyword id="KW-0472">Membrane</keyword>
<keyword id="KW-0645">Protease</keyword>
<keyword id="KW-0812">Transmembrane</keyword>
<keyword id="KW-1133">Transmembrane helix</keyword>
<dbReference type="EC" id="3.4.21.89"/>
<dbReference type="EMBL" id="Z27458">
    <property type="protein sequence ID" value="CAA81814.1"/>
    <property type="molecule type" value="Genomic_DNA"/>
</dbReference>
<dbReference type="EMBL" id="L26259">
    <property type="protein sequence ID" value="AAA22758.1"/>
    <property type="molecule type" value="Genomic_DNA"/>
</dbReference>
<dbReference type="PIR" id="I40051">
    <property type="entry name" value="I40051"/>
</dbReference>
<dbReference type="SMR" id="P41026"/>
<dbReference type="STRING" id="692420.BAMF_2229"/>
<dbReference type="MEROPS" id="S26.003"/>
<dbReference type="eggNOG" id="COG0681">
    <property type="taxonomic scope" value="Bacteria"/>
</dbReference>
<dbReference type="OMA" id="LLKYPRW"/>
<dbReference type="GO" id="GO:0005886">
    <property type="term" value="C:plasma membrane"/>
    <property type="evidence" value="ECO:0007669"/>
    <property type="project" value="UniProtKB-SubCell"/>
</dbReference>
<dbReference type="GO" id="GO:0004252">
    <property type="term" value="F:serine-type endopeptidase activity"/>
    <property type="evidence" value="ECO:0007669"/>
    <property type="project" value="UniProtKB-EC"/>
</dbReference>
<dbReference type="GO" id="GO:0006465">
    <property type="term" value="P:signal peptide processing"/>
    <property type="evidence" value="ECO:0007669"/>
    <property type="project" value="InterPro"/>
</dbReference>
<dbReference type="CDD" id="cd06530">
    <property type="entry name" value="S26_SPase_I"/>
    <property type="match status" value="1"/>
</dbReference>
<dbReference type="FunFam" id="2.10.109.10:FF:000008">
    <property type="entry name" value="Signal peptidase I"/>
    <property type="match status" value="1"/>
</dbReference>
<dbReference type="Gene3D" id="2.10.109.10">
    <property type="entry name" value="Umud Fragment, subunit A"/>
    <property type="match status" value="1"/>
</dbReference>
<dbReference type="InterPro" id="IPR036286">
    <property type="entry name" value="LexA/Signal_pep-like_sf"/>
</dbReference>
<dbReference type="InterPro" id="IPR000223">
    <property type="entry name" value="Pept_S26A_signal_pept_1"/>
</dbReference>
<dbReference type="InterPro" id="IPR019758">
    <property type="entry name" value="Pept_S26A_signal_pept_1_CS"/>
</dbReference>
<dbReference type="InterPro" id="IPR019757">
    <property type="entry name" value="Pept_S26A_signal_pept_1_Lys-AS"/>
</dbReference>
<dbReference type="InterPro" id="IPR019756">
    <property type="entry name" value="Pept_S26A_signal_pept_1_Ser-AS"/>
</dbReference>
<dbReference type="InterPro" id="IPR019533">
    <property type="entry name" value="Peptidase_S26"/>
</dbReference>
<dbReference type="NCBIfam" id="TIGR02227">
    <property type="entry name" value="sigpep_I_bact"/>
    <property type="match status" value="1"/>
</dbReference>
<dbReference type="PANTHER" id="PTHR43390:SF1">
    <property type="entry name" value="CHLOROPLAST PROCESSING PEPTIDASE"/>
    <property type="match status" value="1"/>
</dbReference>
<dbReference type="PANTHER" id="PTHR43390">
    <property type="entry name" value="SIGNAL PEPTIDASE I"/>
    <property type="match status" value="1"/>
</dbReference>
<dbReference type="Pfam" id="PF10502">
    <property type="entry name" value="Peptidase_S26"/>
    <property type="match status" value="1"/>
</dbReference>
<dbReference type="PRINTS" id="PR00727">
    <property type="entry name" value="LEADERPTASE"/>
</dbReference>
<dbReference type="SUPFAM" id="SSF51306">
    <property type="entry name" value="LexA/Signal peptidase"/>
    <property type="match status" value="1"/>
</dbReference>
<dbReference type="PROSITE" id="PS00501">
    <property type="entry name" value="SPASE_I_1"/>
    <property type="match status" value="1"/>
</dbReference>
<dbReference type="PROSITE" id="PS00760">
    <property type="entry name" value="SPASE_I_2"/>
    <property type="match status" value="1"/>
</dbReference>
<dbReference type="PROSITE" id="PS00761">
    <property type="entry name" value="SPASE_I_3"/>
    <property type="match status" value="1"/>
</dbReference>
<comment type="catalytic activity">
    <reaction>
        <text>Cleavage of hydrophobic, N-terminal signal or leader sequences from secreted and periplasmic proteins.</text>
        <dbReference type="EC" id="3.4.21.89"/>
    </reaction>
</comment>
<comment type="subcellular location">
    <subcellularLocation>
        <location evidence="3">Cell membrane</location>
        <topology evidence="3">Single-pass type II membrane protein</topology>
    </subcellularLocation>
</comment>
<comment type="similarity">
    <text evidence="3">Belongs to the peptidase S26 family.</text>
</comment>
<name>LEP1_BACAM</name>
<sequence length="185" mass="21104">MKSEKEKTSKKSAVLDWAKAIIIAVVLAVLIRNFLFAPYVVDGESMEPTLHDRERIFVNMTVKYISDFKRGQIVVLNGENEHYVKRIIGLPGDTVQMKNDQLYINGKKVSEPYLAANKKKAKQDGYTLTDDFGPVKVPDDKYFVMGDNRRNSMDSRNGLGLFTKKQIAGTSKFVFFPFNEIRKTK</sequence>
<organism>
    <name type="scientific">Bacillus amyloliquefaciens</name>
    <name type="common">Bacillus velezensis</name>
    <dbReference type="NCBI Taxonomy" id="1390"/>
    <lineage>
        <taxon>Bacteria</taxon>
        <taxon>Bacillati</taxon>
        <taxon>Bacillota</taxon>
        <taxon>Bacilli</taxon>
        <taxon>Bacillales</taxon>
        <taxon>Bacillaceae</taxon>
        <taxon>Bacillus</taxon>
        <taxon>Bacillus amyloliquefaciens group</taxon>
    </lineage>
</organism>
<proteinExistence type="inferred from homology"/>
<protein>
    <recommendedName>
        <fullName>Signal peptidase I</fullName>
        <shortName>SPase I</shortName>
        <ecNumber>3.4.21.89</ecNumber>
    </recommendedName>
    <alternativeName>
        <fullName>Leader peptidase I</fullName>
    </alternativeName>
</protein>
<gene>
    <name type="primary">sipA</name>
</gene>
<reference key="1">
    <citation type="journal article" date="1995" name="Mol. Microbiol.">
        <title>The endogenous Bacillus subtilis (natto) plasmids pTA1015 and pTA1040 contain signal peptidase-encoding genes: identification of a new structural module on cryptic plasmids.</title>
        <authorList>
            <person name="Meijer W.J.J."/>
            <person name="de Jong A."/>
            <person name="Bea G."/>
            <person name="Wisman A."/>
            <person name="Tjalsma H."/>
            <person name="Venema G."/>
            <person name="Bron S."/>
            <person name="van Dijl J.M."/>
        </authorList>
    </citation>
    <scope>NUCLEOTIDE SEQUENCE [GENOMIC DNA]</scope>
</reference>
<evidence type="ECO:0000250" key="1"/>
<evidence type="ECO:0000255" key="2"/>
<evidence type="ECO:0000305" key="3"/>
<feature type="chain" id="PRO_0000109493" description="Signal peptidase I">
    <location>
        <begin position="1"/>
        <end position="185"/>
    </location>
</feature>
<feature type="topological domain" description="Cytoplasmic" evidence="2">
    <location>
        <begin position="1"/>
        <end position="20"/>
    </location>
</feature>
<feature type="transmembrane region" description="Helical" evidence="2">
    <location>
        <begin position="21"/>
        <end position="41"/>
    </location>
</feature>
<feature type="topological domain" description="Extracellular" evidence="2">
    <location>
        <begin position="42"/>
        <end position="185"/>
    </location>
</feature>
<feature type="active site" evidence="1">
    <location>
        <position position="45"/>
    </location>
</feature>
<feature type="active site" evidence="1">
    <location>
        <position position="85"/>
    </location>
</feature>
<accession>P41026</accession>